<organism>
    <name type="scientific">Desulforapulum autotrophicum (strain ATCC 43914 / DSM 3382 / VKM B-1955 / HRM2)</name>
    <name type="common">Desulfobacterium autotrophicum</name>
    <dbReference type="NCBI Taxonomy" id="177437"/>
    <lineage>
        <taxon>Bacteria</taxon>
        <taxon>Pseudomonadati</taxon>
        <taxon>Thermodesulfobacteriota</taxon>
        <taxon>Desulfobacteria</taxon>
        <taxon>Desulfobacterales</taxon>
        <taxon>Desulfobacteraceae</taxon>
        <taxon>Desulforapulum</taxon>
    </lineage>
</organism>
<comment type="function">
    <text evidence="2">Catalyzes the epimerization of L-Lys-L-Arg to L-Lys-D-Arg (in vitro). Catalyzes the epimerization of positively charged dipeptides, with a preference for substrates with a basic amino acid in the second position. Has epimerase activity with L-Lys-L-Lys, L-Arg-L-Arg, L-Val-L-Arg, L-Val-L-Lys and L-Ala-L-Arg (in vitro).</text>
</comment>
<comment type="cofactor">
    <cofactor evidence="2">
        <name>Mg(2+)</name>
        <dbReference type="ChEBI" id="CHEBI:18420"/>
    </cofactor>
    <text evidence="2">Binds 1 Mg(2+) ion per subunit.</text>
</comment>
<comment type="miscellaneous">
    <text>Part of a large, functionally divergent protein family. Protein modeling and substrate docking was used to predict the substrate specificity, prior to biochemical analysis.</text>
</comment>
<comment type="similarity">
    <text evidence="3">Belongs to the mandelate racemase/muconate lactonizing enzyme family.</text>
</comment>
<feature type="chain" id="PRO_0000429656" description="L-Lys-D/L-Arg epimerase">
    <location>
        <begin position="1"/>
        <end position="354"/>
    </location>
</feature>
<feature type="binding site" evidence="1">
    <location>
        <position position="135"/>
    </location>
    <ligand>
        <name>substrate</name>
    </ligand>
</feature>
<feature type="binding site" evidence="1">
    <location>
        <begin position="160"/>
        <end position="162"/>
    </location>
    <ligand>
        <name>substrate</name>
    </ligand>
</feature>
<feature type="binding site" evidence="1">
    <location>
        <position position="190"/>
    </location>
    <ligand>
        <name>Mg(2+)</name>
        <dbReference type="ChEBI" id="CHEBI:18420"/>
    </ligand>
</feature>
<feature type="binding site" evidence="1">
    <location>
        <position position="215"/>
    </location>
    <ligand>
        <name>Mg(2+)</name>
        <dbReference type="ChEBI" id="CHEBI:18420"/>
    </ligand>
</feature>
<feature type="binding site" evidence="1">
    <location>
        <position position="240"/>
    </location>
    <ligand>
        <name>Mg(2+)</name>
        <dbReference type="ChEBI" id="CHEBI:18420"/>
    </ligand>
</feature>
<feature type="binding site" evidence="1">
    <location>
        <position position="265"/>
    </location>
    <ligand>
        <name>substrate</name>
    </ligand>
</feature>
<feature type="binding site" evidence="1">
    <location>
        <position position="295"/>
    </location>
    <ligand>
        <name>substrate</name>
    </ligand>
</feature>
<feature type="binding site" evidence="1">
    <location>
        <begin position="318"/>
        <end position="320"/>
    </location>
    <ligand>
        <name>substrate</name>
    </ligand>
</feature>
<reference key="1">
    <citation type="journal article" date="2009" name="Environ. Microbiol.">
        <title>Genome sequence of Desulfobacterium autotrophicum HRM2, a marine sulfate reducer oxidizing organic carbon completely to carbon dioxide.</title>
        <authorList>
            <person name="Strittmatter A.W."/>
            <person name="Liesegang H."/>
            <person name="Rabus R."/>
            <person name="Decker I."/>
            <person name="Amann J."/>
            <person name="Andres S."/>
            <person name="Henne A."/>
            <person name="Fricke W.F."/>
            <person name="Martinez-Arias R."/>
            <person name="Bartels D."/>
            <person name="Goesmann A."/>
            <person name="Krause L."/>
            <person name="Puehler A."/>
            <person name="Klenk H.P."/>
            <person name="Richter M."/>
            <person name="Schuler M."/>
            <person name="Gloeckner F.O."/>
            <person name="Meyerdierks A."/>
            <person name="Gottschalk G."/>
            <person name="Amann R."/>
        </authorList>
    </citation>
    <scope>NUCLEOTIDE SEQUENCE [LARGE SCALE GENOMIC DNA]</scope>
    <source>
        <strain>ATCC 43914 / DSM 3382 / VKM B-1955 / HRM2</strain>
    </source>
</reference>
<reference key="2">
    <citation type="journal article" date="2012" name="Proc. Natl. Acad. Sci. U.S.A.">
        <title>Homology models guide discovery of diverse enzyme specificities among dipeptide epimerases in the enolase superfamily.</title>
        <authorList>
            <person name="Lukk T."/>
            <person name="Sakai A."/>
            <person name="Kalyanaraman C."/>
            <person name="Brown S.D."/>
            <person name="Imker H.J."/>
            <person name="Song L."/>
            <person name="Fedorov A.A."/>
            <person name="Fedorov E.V."/>
            <person name="Toro R."/>
            <person name="Hillerich B."/>
            <person name="Seidel R."/>
            <person name="Patskovsky Y."/>
            <person name="Vetting M.W."/>
            <person name="Nair S.K."/>
            <person name="Babbitt P.C."/>
            <person name="Almo S.C."/>
            <person name="Gerlt J.A."/>
            <person name="Jacobson M.P."/>
        </authorList>
    </citation>
    <scope>FUNCTION</scope>
    <scope>COFACTOR</scope>
</reference>
<protein>
    <recommendedName>
        <fullName>L-Lys-D/L-Arg epimerase</fullName>
        <ecNumber>5.1.1.-</ecNumber>
    </recommendedName>
    <alternativeName>
        <fullName>Cationic dipeptide epimerase</fullName>
    </alternativeName>
</protein>
<accession>C0QM06</accession>
<keyword id="KW-0413">Isomerase</keyword>
<keyword id="KW-0460">Magnesium</keyword>
<keyword id="KW-0479">Metal-binding</keyword>
<keyword id="KW-1185">Reference proteome</keyword>
<evidence type="ECO:0000250" key="1"/>
<evidence type="ECO:0000269" key="2">
    <source>
    </source>
</evidence>
<evidence type="ECO:0000305" key="3"/>
<gene>
    <name type="ordered locus">HRM2_12000</name>
</gene>
<proteinExistence type="inferred from homology"/>
<sequence>MKIKEITIWKEDLALTRPYTIAYETISAVENVFVLLETDNGITGIGAGSPAEDVTGETITATETALSLKLAPILQGKDIRSCFSLLKELNTALADTPAALAAADIALHDLAAKTMGLPLVDLLGRVHDRLPTSITIGIMPVKETLAEAEEYLGRGFSILKIKTGLNVEEDIERIIRLNETFKSKICMRVDANQGYEVEELHHFFKKTVGLVEFIEQPLKAEHLEKMGQLPQAIRRVSAADETLLGPRDAAQMLHAPRPFGIFNIKLMKCGGIAPGLEIANMAGHADIDLMWGCMDESIVSIAGALHAAFSSRATRYLDLDGSLDLARDIVNGGFILENGWMRTTDQPGLGVKRI</sequence>
<dbReference type="EC" id="5.1.1.-"/>
<dbReference type="EMBL" id="CP001087">
    <property type="protein sequence ID" value="ACN14312.1"/>
    <property type="molecule type" value="Genomic_DNA"/>
</dbReference>
<dbReference type="RefSeq" id="WP_015903101.1">
    <property type="nucleotide sequence ID" value="NC_012108.1"/>
</dbReference>
<dbReference type="SMR" id="C0QM06"/>
<dbReference type="STRING" id="177437.HRM2_12000"/>
<dbReference type="KEGG" id="dat:HRM2_12000"/>
<dbReference type="eggNOG" id="COG4948">
    <property type="taxonomic scope" value="Bacteria"/>
</dbReference>
<dbReference type="HOGENOM" id="CLU_030273_4_0_7"/>
<dbReference type="OrthoDB" id="9782675at2"/>
<dbReference type="Proteomes" id="UP000000442">
    <property type="component" value="Chromosome"/>
</dbReference>
<dbReference type="GO" id="GO:0046872">
    <property type="term" value="F:metal ion binding"/>
    <property type="evidence" value="ECO:0007669"/>
    <property type="project" value="UniProtKB-KW"/>
</dbReference>
<dbReference type="GO" id="GO:0016854">
    <property type="term" value="F:racemase and epimerase activity"/>
    <property type="evidence" value="ECO:0000314"/>
    <property type="project" value="UniProtKB"/>
</dbReference>
<dbReference type="GO" id="GO:0016855">
    <property type="term" value="F:racemase and epimerase activity, acting on amino acids and derivatives"/>
    <property type="evidence" value="ECO:0007669"/>
    <property type="project" value="InterPro"/>
</dbReference>
<dbReference type="GO" id="GO:0006518">
    <property type="term" value="P:peptide metabolic process"/>
    <property type="evidence" value="ECO:0000314"/>
    <property type="project" value="UniProtKB"/>
</dbReference>
<dbReference type="CDD" id="cd03319">
    <property type="entry name" value="L-Ala-DL-Glu_epimerase"/>
    <property type="match status" value="1"/>
</dbReference>
<dbReference type="FunFam" id="3.30.390.10:FF:000009">
    <property type="entry name" value="Hydrophobic dipeptide epimerase"/>
    <property type="match status" value="1"/>
</dbReference>
<dbReference type="Gene3D" id="3.20.20.120">
    <property type="entry name" value="Enolase-like C-terminal domain"/>
    <property type="match status" value="1"/>
</dbReference>
<dbReference type="Gene3D" id="3.30.390.10">
    <property type="entry name" value="Enolase-like, N-terminal domain"/>
    <property type="match status" value="1"/>
</dbReference>
<dbReference type="InterPro" id="IPR034603">
    <property type="entry name" value="Dipeptide_epimerase"/>
</dbReference>
<dbReference type="InterPro" id="IPR036849">
    <property type="entry name" value="Enolase-like_C_sf"/>
</dbReference>
<dbReference type="InterPro" id="IPR029017">
    <property type="entry name" value="Enolase-like_N"/>
</dbReference>
<dbReference type="InterPro" id="IPR029065">
    <property type="entry name" value="Enolase_C-like"/>
</dbReference>
<dbReference type="InterPro" id="IPR013342">
    <property type="entry name" value="Mandelate_racemase_C"/>
</dbReference>
<dbReference type="InterPro" id="IPR013341">
    <property type="entry name" value="Mandelate_racemase_N_dom"/>
</dbReference>
<dbReference type="PANTHER" id="PTHR48073:SF2">
    <property type="entry name" value="O-SUCCINYLBENZOATE SYNTHASE"/>
    <property type="match status" value="1"/>
</dbReference>
<dbReference type="PANTHER" id="PTHR48073">
    <property type="entry name" value="O-SUCCINYLBENZOATE SYNTHASE-RELATED"/>
    <property type="match status" value="1"/>
</dbReference>
<dbReference type="Pfam" id="PF13378">
    <property type="entry name" value="MR_MLE_C"/>
    <property type="match status" value="1"/>
</dbReference>
<dbReference type="Pfam" id="PF02746">
    <property type="entry name" value="MR_MLE_N"/>
    <property type="match status" value="1"/>
</dbReference>
<dbReference type="SFLD" id="SFLDS00001">
    <property type="entry name" value="Enolase"/>
    <property type="match status" value="1"/>
</dbReference>
<dbReference type="SFLD" id="SFLDG00180">
    <property type="entry name" value="muconate_cycloisomerase"/>
    <property type="match status" value="1"/>
</dbReference>
<dbReference type="SMART" id="SM00922">
    <property type="entry name" value="MR_MLE"/>
    <property type="match status" value="1"/>
</dbReference>
<dbReference type="SUPFAM" id="SSF51604">
    <property type="entry name" value="Enolase C-terminal domain-like"/>
    <property type="match status" value="1"/>
</dbReference>
<dbReference type="SUPFAM" id="SSF54826">
    <property type="entry name" value="Enolase N-terminal domain-like"/>
    <property type="match status" value="1"/>
</dbReference>
<name>KRDE_DESAH</name>